<proteinExistence type="predicted"/>
<accession>Q03480</accession>
<accession>A0A1S0T065</accession>
<name>YD209_YEAST</name>
<comment type="subcellular location">
    <subcellularLocation>
        <location evidence="2">Membrane</location>
        <topology evidence="2">Single-pass membrane protein</topology>
    </subcellularLocation>
</comment>
<reference key="1">
    <citation type="journal article" date="1997" name="Nature">
        <title>The nucleotide sequence of Saccharomyces cerevisiae chromosome IV.</title>
        <authorList>
            <person name="Jacq C."/>
            <person name="Alt-Moerbe J."/>
            <person name="Andre B."/>
            <person name="Arnold W."/>
            <person name="Bahr A."/>
            <person name="Ballesta J.P.G."/>
            <person name="Bargues M."/>
            <person name="Baron L."/>
            <person name="Becker A."/>
            <person name="Biteau N."/>
            <person name="Bloecker H."/>
            <person name="Blugeon C."/>
            <person name="Boskovic J."/>
            <person name="Brandt P."/>
            <person name="Brueckner M."/>
            <person name="Buitrago M.J."/>
            <person name="Coster F."/>
            <person name="Delaveau T."/>
            <person name="del Rey F."/>
            <person name="Dujon B."/>
            <person name="Eide L.G."/>
            <person name="Garcia-Cantalejo J.M."/>
            <person name="Goffeau A."/>
            <person name="Gomez-Peris A."/>
            <person name="Granotier C."/>
            <person name="Hanemann V."/>
            <person name="Hankeln T."/>
            <person name="Hoheisel J.D."/>
            <person name="Jaeger W."/>
            <person name="Jimenez A."/>
            <person name="Jonniaux J.-L."/>
            <person name="Kraemer C."/>
            <person name="Kuester H."/>
            <person name="Laamanen P."/>
            <person name="Legros Y."/>
            <person name="Louis E.J."/>
            <person name="Moeller-Rieker S."/>
            <person name="Monnet A."/>
            <person name="Moro M."/>
            <person name="Mueller-Auer S."/>
            <person name="Nussbaumer B."/>
            <person name="Paricio N."/>
            <person name="Paulin L."/>
            <person name="Perea J."/>
            <person name="Perez-Alonso M."/>
            <person name="Perez-Ortin J.E."/>
            <person name="Pohl T.M."/>
            <person name="Prydz H."/>
            <person name="Purnelle B."/>
            <person name="Rasmussen S.W."/>
            <person name="Remacha M.A."/>
            <person name="Revuelta J.L."/>
            <person name="Rieger M."/>
            <person name="Salom D."/>
            <person name="Saluz H.P."/>
            <person name="Saiz J.E."/>
            <person name="Saren A.-M."/>
            <person name="Schaefer M."/>
            <person name="Scharfe M."/>
            <person name="Schmidt E.R."/>
            <person name="Schneider C."/>
            <person name="Scholler P."/>
            <person name="Schwarz S."/>
            <person name="Soler-Mira A."/>
            <person name="Urrestarazu L.A."/>
            <person name="Verhasselt P."/>
            <person name="Vissers S."/>
            <person name="Voet M."/>
            <person name="Volckaert G."/>
            <person name="Wagner G."/>
            <person name="Wambutt R."/>
            <person name="Wedler E."/>
            <person name="Wedler H."/>
            <person name="Woelfl S."/>
            <person name="Harris D.E."/>
            <person name="Bowman S."/>
            <person name="Brown D."/>
            <person name="Churcher C.M."/>
            <person name="Connor R."/>
            <person name="Dedman K."/>
            <person name="Gentles S."/>
            <person name="Hamlin N."/>
            <person name="Hunt S."/>
            <person name="Jones L."/>
            <person name="McDonald S."/>
            <person name="Murphy L.D."/>
            <person name="Niblett D."/>
            <person name="Odell C."/>
            <person name="Oliver K."/>
            <person name="Rajandream M.A."/>
            <person name="Richards C."/>
            <person name="Shore L."/>
            <person name="Walsh S.V."/>
            <person name="Barrell B.G."/>
            <person name="Dietrich F.S."/>
            <person name="Mulligan J.T."/>
            <person name="Allen E."/>
            <person name="Araujo R."/>
            <person name="Aviles E."/>
            <person name="Berno A."/>
            <person name="Carpenter J."/>
            <person name="Chen E."/>
            <person name="Cherry J.M."/>
            <person name="Chung E."/>
            <person name="Duncan M."/>
            <person name="Hunicke-Smith S."/>
            <person name="Hyman R.W."/>
            <person name="Komp C."/>
            <person name="Lashkari D."/>
            <person name="Lew H."/>
            <person name="Lin D."/>
            <person name="Mosedale D."/>
            <person name="Nakahara K."/>
            <person name="Namath A."/>
            <person name="Oefner P."/>
            <person name="Oh C."/>
            <person name="Petel F.X."/>
            <person name="Roberts D."/>
            <person name="Schramm S."/>
            <person name="Schroeder M."/>
            <person name="Shogren T."/>
            <person name="Shroff N."/>
            <person name="Winant A."/>
            <person name="Yelton M.A."/>
            <person name="Botstein D."/>
            <person name="Davis R.W."/>
            <person name="Johnston M."/>
            <person name="Andrews S."/>
            <person name="Brinkman R."/>
            <person name="Cooper J."/>
            <person name="Ding H."/>
            <person name="Du Z."/>
            <person name="Favello A."/>
            <person name="Fulton L."/>
            <person name="Gattung S."/>
            <person name="Greco T."/>
            <person name="Hallsworth K."/>
            <person name="Hawkins J."/>
            <person name="Hillier L.W."/>
            <person name="Jier M."/>
            <person name="Johnson D."/>
            <person name="Johnston L."/>
            <person name="Kirsten J."/>
            <person name="Kucaba T."/>
            <person name="Langston Y."/>
            <person name="Latreille P."/>
            <person name="Le T."/>
            <person name="Mardis E."/>
            <person name="Menezes S."/>
            <person name="Miller N."/>
            <person name="Nhan M."/>
            <person name="Pauley A."/>
            <person name="Peluso D."/>
            <person name="Rifkin L."/>
            <person name="Riles L."/>
            <person name="Taich A."/>
            <person name="Trevaskis E."/>
            <person name="Vignati D."/>
            <person name="Wilcox L."/>
            <person name="Wohldman P."/>
            <person name="Vaudin M."/>
            <person name="Wilson R."/>
            <person name="Waterston R."/>
            <person name="Albermann K."/>
            <person name="Hani J."/>
            <person name="Heumann K."/>
            <person name="Kleine K."/>
            <person name="Mewes H.-W."/>
            <person name="Zollner A."/>
            <person name="Zaccaria P."/>
        </authorList>
    </citation>
    <scope>NUCLEOTIDE SEQUENCE [LARGE SCALE GENOMIC DNA]</scope>
    <source>
        <strain>ATCC 204508 / S288c</strain>
    </source>
</reference>
<reference key="2">
    <citation type="journal article" date="2014" name="G3 (Bethesda)">
        <title>The reference genome sequence of Saccharomyces cerevisiae: Then and now.</title>
        <authorList>
            <person name="Engel S.R."/>
            <person name="Dietrich F.S."/>
            <person name="Fisk D.G."/>
            <person name="Binkley G."/>
            <person name="Balakrishnan R."/>
            <person name="Costanzo M.C."/>
            <person name="Dwight S.S."/>
            <person name="Hitz B.C."/>
            <person name="Karra K."/>
            <person name="Nash R.S."/>
            <person name="Weng S."/>
            <person name="Wong E.D."/>
            <person name="Lloyd P."/>
            <person name="Skrzypek M.S."/>
            <person name="Miyasato S.R."/>
            <person name="Simison M."/>
            <person name="Cherry J.M."/>
        </authorList>
    </citation>
    <scope>GENOME REANNOTATION</scope>
    <source>
        <strain>ATCC 204508 / S288c</strain>
    </source>
</reference>
<protein>
    <recommendedName>
        <fullName>Uncharacterized protein YDR209C</fullName>
    </recommendedName>
</protein>
<keyword id="KW-0472">Membrane</keyword>
<keyword id="KW-1185">Reference proteome</keyword>
<keyword id="KW-0812">Transmembrane</keyword>
<keyword id="KW-1133">Transmembrane helix</keyword>
<gene>
    <name type="ordered locus">YDR209C</name>
    <name type="ORF">YD8142A.06c</name>
</gene>
<sequence length="137" mass="15418">MNDGQFLFQRNDPIILYTFLLKSNYTVFRSIDERLCDFVFYIDHFLNKRISYRIPILIRNNNTNILNNCPSSFPPLVDLVGHRLVAAEDNPVAVDLVDNNLVVVDLVDNNLAVGVLVGSNLVVGSLVFALLTCFEDG</sequence>
<dbReference type="EMBL" id="Z68194">
    <property type="protein sequence ID" value="CAA92348.1"/>
    <property type="molecule type" value="Genomic_DNA"/>
</dbReference>
<dbReference type="EMBL" id="BK006938">
    <property type="protein sequence ID" value="DAA80278.1"/>
    <property type="molecule type" value="Genomic_DNA"/>
</dbReference>
<dbReference type="PIR" id="S61572">
    <property type="entry name" value="S61572"/>
</dbReference>
<dbReference type="RefSeq" id="NP_001335758.1">
    <property type="nucleotide sequence ID" value="NM_001348813.1"/>
</dbReference>
<dbReference type="FunCoup" id="Q03480">
    <property type="interactions" value="64"/>
</dbReference>
<dbReference type="PaxDb" id="4932-YDR209C"/>
<dbReference type="EnsemblFungi" id="YDR209C_mRNA">
    <property type="protein sequence ID" value="YDR209C"/>
    <property type="gene ID" value="YDR209C"/>
</dbReference>
<dbReference type="GeneID" id="851791"/>
<dbReference type="AGR" id="SGD:S000002617"/>
<dbReference type="SGD" id="S000002617">
    <property type="gene designation" value="YDR209C"/>
</dbReference>
<dbReference type="HOGENOM" id="CLU_154765_0_0_1"/>
<dbReference type="InParanoid" id="Q03480"/>
<dbReference type="OMA" id="NYIVFRS"/>
<dbReference type="OrthoDB" id="4068167at2759"/>
<dbReference type="PRO" id="PR:Q03480"/>
<dbReference type="Proteomes" id="UP000002311">
    <property type="component" value="Chromosome IV"/>
</dbReference>
<dbReference type="RNAct" id="Q03480">
    <property type="molecule type" value="protein"/>
</dbReference>
<dbReference type="GO" id="GO:0016020">
    <property type="term" value="C:membrane"/>
    <property type="evidence" value="ECO:0007669"/>
    <property type="project" value="UniProtKB-SubCell"/>
</dbReference>
<evidence type="ECO:0000255" key="1"/>
<evidence type="ECO:0000305" key="2"/>
<organism>
    <name type="scientific">Saccharomyces cerevisiae (strain ATCC 204508 / S288c)</name>
    <name type="common">Baker's yeast</name>
    <dbReference type="NCBI Taxonomy" id="559292"/>
    <lineage>
        <taxon>Eukaryota</taxon>
        <taxon>Fungi</taxon>
        <taxon>Dikarya</taxon>
        <taxon>Ascomycota</taxon>
        <taxon>Saccharomycotina</taxon>
        <taxon>Saccharomycetes</taxon>
        <taxon>Saccharomycetales</taxon>
        <taxon>Saccharomycetaceae</taxon>
        <taxon>Saccharomyces</taxon>
    </lineage>
</organism>
<feature type="chain" id="PRO_0000299875" description="Uncharacterized protein YDR209C">
    <location>
        <begin position="1"/>
        <end position="137"/>
    </location>
</feature>
<feature type="transmembrane region" description="Helical" evidence="1">
    <location>
        <begin position="111"/>
        <end position="131"/>
    </location>
</feature>